<proteinExistence type="inferred from homology"/>
<dbReference type="EMBL" id="BX571965">
    <property type="protein sequence ID" value="CAH36772.1"/>
    <property type="molecule type" value="Genomic_DNA"/>
</dbReference>
<dbReference type="RefSeq" id="WP_004533572.1">
    <property type="nucleotide sequence ID" value="NZ_CP009538.1"/>
</dbReference>
<dbReference type="RefSeq" id="YP_109360.1">
    <property type="nucleotide sequence ID" value="NC_006350.1"/>
</dbReference>
<dbReference type="SMR" id="Q63RA8"/>
<dbReference type="STRING" id="272560.BPSL2764"/>
<dbReference type="GeneID" id="93061351"/>
<dbReference type="KEGG" id="bps:BPSL2764"/>
<dbReference type="PATRIC" id="fig|272560.51.peg.2551"/>
<dbReference type="eggNOG" id="COG0823">
    <property type="taxonomic scope" value="Bacteria"/>
</dbReference>
<dbReference type="Proteomes" id="UP000000605">
    <property type="component" value="Chromosome 1"/>
</dbReference>
<dbReference type="GO" id="GO:0042597">
    <property type="term" value="C:periplasmic space"/>
    <property type="evidence" value="ECO:0007669"/>
    <property type="project" value="UniProtKB-SubCell"/>
</dbReference>
<dbReference type="GO" id="GO:0051301">
    <property type="term" value="P:cell division"/>
    <property type="evidence" value="ECO:0007669"/>
    <property type="project" value="UniProtKB-UniRule"/>
</dbReference>
<dbReference type="GO" id="GO:0017038">
    <property type="term" value="P:protein import"/>
    <property type="evidence" value="ECO:0007669"/>
    <property type="project" value="InterPro"/>
</dbReference>
<dbReference type="Gene3D" id="2.120.10.30">
    <property type="entry name" value="TolB, C-terminal domain"/>
    <property type="match status" value="1"/>
</dbReference>
<dbReference type="Gene3D" id="3.40.50.10070">
    <property type="entry name" value="TolB, N-terminal domain"/>
    <property type="match status" value="1"/>
</dbReference>
<dbReference type="HAMAP" id="MF_00671">
    <property type="entry name" value="TolB"/>
    <property type="match status" value="1"/>
</dbReference>
<dbReference type="InterPro" id="IPR011042">
    <property type="entry name" value="6-blade_b-propeller_TolB-like"/>
</dbReference>
<dbReference type="InterPro" id="IPR011659">
    <property type="entry name" value="PD40"/>
</dbReference>
<dbReference type="InterPro" id="IPR014167">
    <property type="entry name" value="Tol-Pal_TolB"/>
</dbReference>
<dbReference type="InterPro" id="IPR007195">
    <property type="entry name" value="TolB_N"/>
</dbReference>
<dbReference type="NCBIfam" id="TIGR02800">
    <property type="entry name" value="propeller_TolB"/>
    <property type="match status" value="1"/>
</dbReference>
<dbReference type="PANTHER" id="PTHR36842:SF1">
    <property type="entry name" value="PROTEIN TOLB"/>
    <property type="match status" value="1"/>
</dbReference>
<dbReference type="PANTHER" id="PTHR36842">
    <property type="entry name" value="PROTEIN TOLB HOMOLOG"/>
    <property type="match status" value="1"/>
</dbReference>
<dbReference type="Pfam" id="PF07676">
    <property type="entry name" value="PD40"/>
    <property type="match status" value="5"/>
</dbReference>
<dbReference type="Pfam" id="PF04052">
    <property type="entry name" value="TolB_N"/>
    <property type="match status" value="1"/>
</dbReference>
<dbReference type="SUPFAM" id="SSF52964">
    <property type="entry name" value="TolB, N-terminal domain"/>
    <property type="match status" value="1"/>
</dbReference>
<dbReference type="SUPFAM" id="SSF69304">
    <property type="entry name" value="Tricorn protease N-terminal domain"/>
    <property type="match status" value="1"/>
</dbReference>
<evidence type="ECO:0000255" key="1">
    <source>
        <dbReference type="HAMAP-Rule" id="MF_00671"/>
    </source>
</evidence>
<feature type="signal peptide" evidence="1">
    <location>
        <begin position="1"/>
        <end position="26"/>
    </location>
</feature>
<feature type="chain" id="PRO_0000034633" description="Tol-Pal system protein TolB" evidence="1">
    <location>
        <begin position="27"/>
        <end position="433"/>
    </location>
</feature>
<comment type="function">
    <text evidence="1">Part of the Tol-Pal system, which plays a role in outer membrane invagination during cell division and is important for maintaining outer membrane integrity.</text>
</comment>
<comment type="subunit">
    <text evidence="1">The Tol-Pal system is composed of five core proteins: the inner membrane proteins TolA, TolQ and TolR, the periplasmic protein TolB and the outer membrane protein Pal. They form a network linking the inner and outer membranes and the peptidoglycan layer.</text>
</comment>
<comment type="subcellular location">
    <subcellularLocation>
        <location evidence="1">Periplasm</location>
    </subcellularLocation>
</comment>
<comment type="similarity">
    <text evidence="1">Belongs to the TolB family.</text>
</comment>
<name>TOLB_BURPS</name>
<gene>
    <name evidence="1" type="primary">tolB</name>
    <name type="ordered locus">BPSL2764</name>
</gene>
<protein>
    <recommendedName>
        <fullName evidence="1">Tol-Pal system protein TolB</fullName>
    </recommendedName>
</protein>
<reference key="1">
    <citation type="journal article" date="2004" name="Proc. Natl. Acad. Sci. U.S.A.">
        <title>Genomic plasticity of the causative agent of melioidosis, Burkholderia pseudomallei.</title>
        <authorList>
            <person name="Holden M.T.G."/>
            <person name="Titball R.W."/>
            <person name="Peacock S.J."/>
            <person name="Cerdeno-Tarraga A.-M."/>
            <person name="Atkins T."/>
            <person name="Crossman L.C."/>
            <person name="Pitt T."/>
            <person name="Churcher C."/>
            <person name="Mungall K.L."/>
            <person name="Bentley S.D."/>
            <person name="Sebaihia M."/>
            <person name="Thomson N.R."/>
            <person name="Bason N."/>
            <person name="Beacham I.R."/>
            <person name="Brooks K."/>
            <person name="Brown K.A."/>
            <person name="Brown N.F."/>
            <person name="Challis G.L."/>
            <person name="Cherevach I."/>
            <person name="Chillingworth T."/>
            <person name="Cronin A."/>
            <person name="Crossett B."/>
            <person name="Davis P."/>
            <person name="DeShazer D."/>
            <person name="Feltwell T."/>
            <person name="Fraser A."/>
            <person name="Hance Z."/>
            <person name="Hauser H."/>
            <person name="Holroyd S."/>
            <person name="Jagels K."/>
            <person name="Keith K.E."/>
            <person name="Maddison M."/>
            <person name="Moule S."/>
            <person name="Price C."/>
            <person name="Quail M.A."/>
            <person name="Rabbinowitsch E."/>
            <person name="Rutherford K."/>
            <person name="Sanders M."/>
            <person name="Simmonds M."/>
            <person name="Songsivilai S."/>
            <person name="Stevens K."/>
            <person name="Tumapa S."/>
            <person name="Vesaratchavest M."/>
            <person name="Whitehead S."/>
            <person name="Yeats C."/>
            <person name="Barrell B.G."/>
            <person name="Oyston P.C.F."/>
            <person name="Parkhill J."/>
        </authorList>
    </citation>
    <scope>NUCLEOTIDE SEQUENCE [LARGE SCALE GENOMIC DNA]</scope>
    <source>
        <strain>K96243</strain>
    </source>
</reference>
<organism>
    <name type="scientific">Burkholderia pseudomallei (strain K96243)</name>
    <dbReference type="NCBI Taxonomy" id="272560"/>
    <lineage>
        <taxon>Bacteria</taxon>
        <taxon>Pseudomonadati</taxon>
        <taxon>Pseudomonadota</taxon>
        <taxon>Betaproteobacteria</taxon>
        <taxon>Burkholderiales</taxon>
        <taxon>Burkholderiaceae</taxon>
        <taxon>Burkholderia</taxon>
        <taxon>pseudomallei group</taxon>
    </lineage>
</organism>
<accession>Q63RA8</accession>
<sequence length="433" mass="45894">MSLMTKLGFRALVASCLIAAGGAAHAQVNVLITGVGSTQFPIATANFVNEASLPQQVTSVVRGDLARSGKFSNVDAGSTPVPETASVDFGAWKAKGANAFVAGSVNREPNGQYKVNFILYDTVKQQSLGGLSLTTSNDNEGMRKTGHKIADYIYQKLLGVRGVFNTRLSYVQRTGNVYKLLISDSDGQNAIPALTSKEPIISPAWSPSGTKVAYVSFELRKPVVYIHDLPTGRRYVISNQKGNNSAPAWSPDGQTLAVALSLTGNTQIYSVSSTGTGLRRLTRSSSIDTEPFYSPDGKWIYFTSDRGGAPQIYRMPAEGESAGAAQRVTFTGSYNTSPRVSPDGKLLAYISRTGGGFKLYVQDLQSGAANAVTNTTRDESPSFAANGQYILYATQSGGRSVLAAVPSDGSAPPQILSVQGGAIREPSWGPFMQ</sequence>
<keyword id="KW-0131">Cell cycle</keyword>
<keyword id="KW-0132">Cell division</keyword>
<keyword id="KW-0574">Periplasm</keyword>
<keyword id="KW-1185">Reference proteome</keyword>
<keyword id="KW-0732">Signal</keyword>